<feature type="chain" id="PRO_1000214966" description="Large ribosomal subunit protein uL13">
    <location>
        <begin position="1"/>
        <end position="142"/>
    </location>
</feature>
<sequence length="142" mass="15712">MKTFVAKPETVKRDWYVVDAEGKTLGRLATEIASRLRGKHKAEFTPHVDTGDYIVVINAEKITVTGNKAAAKTYYSYSGFPGGLKSITFDKLIVRKPEMILEIAVKGMLPKGPLGRAMLRKLKVYAGTEHNHAAQQPQVLDI</sequence>
<accession>C4LCK7</accession>
<organism>
    <name type="scientific">Tolumonas auensis (strain DSM 9187 / NBRC 110442 / TA 4)</name>
    <dbReference type="NCBI Taxonomy" id="595494"/>
    <lineage>
        <taxon>Bacteria</taxon>
        <taxon>Pseudomonadati</taxon>
        <taxon>Pseudomonadota</taxon>
        <taxon>Gammaproteobacteria</taxon>
        <taxon>Aeromonadales</taxon>
        <taxon>Aeromonadaceae</taxon>
        <taxon>Tolumonas</taxon>
    </lineage>
</organism>
<evidence type="ECO:0000255" key="1">
    <source>
        <dbReference type="HAMAP-Rule" id="MF_01366"/>
    </source>
</evidence>
<evidence type="ECO:0000305" key="2"/>
<dbReference type="EMBL" id="CP001616">
    <property type="protein sequence ID" value="ACQ94511.1"/>
    <property type="molecule type" value="Genomic_DNA"/>
</dbReference>
<dbReference type="RefSeq" id="WP_015879960.1">
    <property type="nucleotide sequence ID" value="NC_012691.1"/>
</dbReference>
<dbReference type="SMR" id="C4LCK7"/>
<dbReference type="STRING" id="595494.Tola_2922"/>
<dbReference type="KEGG" id="tau:Tola_2922"/>
<dbReference type="eggNOG" id="COG0102">
    <property type="taxonomic scope" value="Bacteria"/>
</dbReference>
<dbReference type="HOGENOM" id="CLU_082184_2_2_6"/>
<dbReference type="OrthoDB" id="9801330at2"/>
<dbReference type="Proteomes" id="UP000009073">
    <property type="component" value="Chromosome"/>
</dbReference>
<dbReference type="GO" id="GO:0022625">
    <property type="term" value="C:cytosolic large ribosomal subunit"/>
    <property type="evidence" value="ECO:0007669"/>
    <property type="project" value="TreeGrafter"/>
</dbReference>
<dbReference type="GO" id="GO:0003729">
    <property type="term" value="F:mRNA binding"/>
    <property type="evidence" value="ECO:0007669"/>
    <property type="project" value="TreeGrafter"/>
</dbReference>
<dbReference type="GO" id="GO:0003735">
    <property type="term" value="F:structural constituent of ribosome"/>
    <property type="evidence" value="ECO:0007669"/>
    <property type="project" value="InterPro"/>
</dbReference>
<dbReference type="GO" id="GO:0017148">
    <property type="term" value="P:negative regulation of translation"/>
    <property type="evidence" value="ECO:0007669"/>
    <property type="project" value="TreeGrafter"/>
</dbReference>
<dbReference type="GO" id="GO:0006412">
    <property type="term" value="P:translation"/>
    <property type="evidence" value="ECO:0007669"/>
    <property type="project" value="UniProtKB-UniRule"/>
</dbReference>
<dbReference type="CDD" id="cd00392">
    <property type="entry name" value="Ribosomal_L13"/>
    <property type="match status" value="1"/>
</dbReference>
<dbReference type="FunFam" id="3.90.1180.10:FF:000001">
    <property type="entry name" value="50S ribosomal protein L13"/>
    <property type="match status" value="1"/>
</dbReference>
<dbReference type="Gene3D" id="3.90.1180.10">
    <property type="entry name" value="Ribosomal protein L13"/>
    <property type="match status" value="1"/>
</dbReference>
<dbReference type="HAMAP" id="MF_01366">
    <property type="entry name" value="Ribosomal_uL13"/>
    <property type="match status" value="1"/>
</dbReference>
<dbReference type="InterPro" id="IPR005822">
    <property type="entry name" value="Ribosomal_uL13"/>
</dbReference>
<dbReference type="InterPro" id="IPR005823">
    <property type="entry name" value="Ribosomal_uL13_bac-type"/>
</dbReference>
<dbReference type="InterPro" id="IPR023563">
    <property type="entry name" value="Ribosomal_uL13_CS"/>
</dbReference>
<dbReference type="InterPro" id="IPR036899">
    <property type="entry name" value="Ribosomal_uL13_sf"/>
</dbReference>
<dbReference type="NCBIfam" id="TIGR01066">
    <property type="entry name" value="rplM_bact"/>
    <property type="match status" value="1"/>
</dbReference>
<dbReference type="PANTHER" id="PTHR11545:SF2">
    <property type="entry name" value="LARGE RIBOSOMAL SUBUNIT PROTEIN UL13M"/>
    <property type="match status" value="1"/>
</dbReference>
<dbReference type="PANTHER" id="PTHR11545">
    <property type="entry name" value="RIBOSOMAL PROTEIN L13"/>
    <property type="match status" value="1"/>
</dbReference>
<dbReference type="Pfam" id="PF00572">
    <property type="entry name" value="Ribosomal_L13"/>
    <property type="match status" value="1"/>
</dbReference>
<dbReference type="PIRSF" id="PIRSF002181">
    <property type="entry name" value="Ribosomal_L13"/>
    <property type="match status" value="1"/>
</dbReference>
<dbReference type="SUPFAM" id="SSF52161">
    <property type="entry name" value="Ribosomal protein L13"/>
    <property type="match status" value="1"/>
</dbReference>
<dbReference type="PROSITE" id="PS00783">
    <property type="entry name" value="RIBOSOMAL_L13"/>
    <property type="match status" value="1"/>
</dbReference>
<comment type="function">
    <text evidence="1">This protein is one of the early assembly proteins of the 50S ribosomal subunit, although it is not seen to bind rRNA by itself. It is important during the early stages of 50S assembly.</text>
</comment>
<comment type="subunit">
    <text evidence="1">Part of the 50S ribosomal subunit.</text>
</comment>
<comment type="similarity">
    <text evidence="1">Belongs to the universal ribosomal protein uL13 family.</text>
</comment>
<protein>
    <recommendedName>
        <fullName evidence="1">Large ribosomal subunit protein uL13</fullName>
    </recommendedName>
    <alternativeName>
        <fullName evidence="2">50S ribosomal protein L13</fullName>
    </alternativeName>
</protein>
<proteinExistence type="inferred from homology"/>
<reference key="1">
    <citation type="submission" date="2009-05" db="EMBL/GenBank/DDBJ databases">
        <title>Complete sequence of Tolumonas auensis DSM 9187.</title>
        <authorList>
            <consortium name="US DOE Joint Genome Institute"/>
            <person name="Lucas S."/>
            <person name="Copeland A."/>
            <person name="Lapidus A."/>
            <person name="Glavina del Rio T."/>
            <person name="Tice H."/>
            <person name="Bruce D."/>
            <person name="Goodwin L."/>
            <person name="Pitluck S."/>
            <person name="Chertkov O."/>
            <person name="Brettin T."/>
            <person name="Detter J.C."/>
            <person name="Han C."/>
            <person name="Larimer F."/>
            <person name="Land M."/>
            <person name="Hauser L."/>
            <person name="Kyrpides N."/>
            <person name="Mikhailova N."/>
            <person name="Spring S."/>
            <person name="Beller H."/>
        </authorList>
    </citation>
    <scope>NUCLEOTIDE SEQUENCE [LARGE SCALE GENOMIC DNA]</scope>
    <source>
        <strain>DSM 9187 / NBRC 110442 / TA 4</strain>
    </source>
</reference>
<gene>
    <name evidence="1" type="primary">rplM</name>
    <name type="ordered locus">Tola_2922</name>
</gene>
<name>RL13_TOLAT</name>
<keyword id="KW-1185">Reference proteome</keyword>
<keyword id="KW-0687">Ribonucleoprotein</keyword>
<keyword id="KW-0689">Ribosomal protein</keyword>